<proteinExistence type="evidence at protein level"/>
<feature type="chain" id="PRO_0000448282" description="Venom phosphodiesterase">
    <location>
        <begin position="1"/>
        <end position="830"/>
    </location>
</feature>
<feature type="domain" description="SMB 1" evidence="3">
    <location>
        <begin position="7"/>
        <end position="50"/>
    </location>
</feature>
<feature type="domain" description="SMB 2" evidence="3">
    <location>
        <begin position="51"/>
        <end position="95"/>
    </location>
</feature>
<feature type="short sequence motif" description="Cell attachment site" evidence="2">
    <location>
        <begin position="35"/>
        <end position="37"/>
    </location>
</feature>
<feature type="active site" description="AMP-threonine intermediate" evidence="4 10">
    <location>
        <position position="162"/>
    </location>
</feature>
<feature type="binding site" evidence="4 9 10">
    <location>
        <position position="124"/>
    </location>
    <ligand>
        <name>a divalent metal cation</name>
        <dbReference type="ChEBI" id="CHEBI:60240"/>
        <label>2</label>
    </ligand>
</feature>
<feature type="binding site" evidence="4 9 10">
    <location>
        <position position="162"/>
    </location>
    <ligand>
        <name>a divalent metal cation</name>
        <dbReference type="ChEBI" id="CHEBI:60240"/>
        <label>2</label>
    </ligand>
</feature>
<feature type="binding site" evidence="4 10">
    <location>
        <position position="248"/>
    </location>
    <ligand>
        <name>AMP</name>
        <dbReference type="ChEBI" id="CHEBI:456215"/>
    </ligand>
</feature>
<feature type="binding site" evidence="4 9 10">
    <location>
        <position position="282"/>
    </location>
    <ligand>
        <name>a divalent metal cation</name>
        <dbReference type="ChEBI" id="CHEBI:60240"/>
        <label>1</label>
    </ligand>
</feature>
<feature type="binding site" evidence="4 9 10">
    <location>
        <position position="286"/>
    </location>
    <ligand>
        <name>a divalent metal cation</name>
        <dbReference type="ChEBI" id="CHEBI:60240"/>
        <label>1</label>
    </ligand>
</feature>
<feature type="binding site" evidence="4 10">
    <location>
        <position position="286"/>
    </location>
    <ligand>
        <name>AMP</name>
        <dbReference type="ChEBI" id="CHEBI:456215"/>
    </ligand>
</feature>
<feature type="binding site" evidence="4 9 10">
    <location>
        <position position="329"/>
    </location>
    <ligand>
        <name>a divalent metal cation</name>
        <dbReference type="ChEBI" id="CHEBI:60240"/>
        <label>2</label>
    </ligand>
</feature>
<feature type="binding site" evidence="4 9 10">
    <location>
        <position position="330"/>
    </location>
    <ligand>
        <name>a divalent metal cation</name>
        <dbReference type="ChEBI" id="CHEBI:60240"/>
        <label>2</label>
    </ligand>
</feature>
<feature type="binding site" evidence="4 9 10">
    <location>
        <position position="439"/>
    </location>
    <ligand>
        <name>a divalent metal cation</name>
        <dbReference type="ChEBI" id="CHEBI:60240"/>
        <label>1</label>
    </ligand>
</feature>
<feature type="glycosylation site" description="N-linked (GlcNAc...) asparagine" evidence="4 9">
    <location>
        <position position="16"/>
    </location>
</feature>
<feature type="glycosylation site" description="N-linked (GlcNAc...) asparagine" evidence="4 9 10">
    <location>
        <position position="193"/>
    </location>
</feature>
<feature type="glycosylation site" description="N-linked (GlcNAc...) asparagine" evidence="4 9 10">
    <location>
        <position position="236"/>
    </location>
</feature>
<feature type="glycosylation site" description="N-linked (GlcNAc...) asparagine" evidence="4 9 10">
    <location>
        <position position="247"/>
    </location>
</feature>
<feature type="glycosylation site" description="N-linked (GlcNAc...) asparagine" evidence="4 9 10">
    <location>
        <position position="489"/>
    </location>
</feature>
<feature type="glycosylation site" description="N-linked (GlcNAc...) asparagine" evidence="4 9 10">
    <location>
        <position position="723"/>
    </location>
</feature>
<feature type="glycosylation site" description="N-linked (GlcNAc...) asparagine" evidence="4 10">
    <location>
        <position position="742"/>
    </location>
</feature>
<feature type="disulfide bond" description="Alternate" evidence="4 9">
    <location>
        <begin position="11"/>
        <end position="28"/>
    </location>
</feature>
<feature type="disulfide bond" description="Alternate" evidence="3">
    <location>
        <begin position="11"/>
        <end position="15"/>
    </location>
</feature>
<feature type="disulfide bond" description="Alternate" evidence="4 9">
    <location>
        <begin position="15"/>
        <end position="46"/>
    </location>
</feature>
<feature type="disulfide bond" description="Alternate" evidence="4 9">
    <location>
        <begin position="26"/>
        <end position="39"/>
    </location>
</feature>
<feature type="disulfide bond" description="Alternate" evidence="3">
    <location>
        <begin position="26"/>
        <end position="28"/>
    </location>
</feature>
<feature type="disulfide bond" evidence="4 9">
    <location>
        <begin position="32"/>
        <end position="38"/>
    </location>
</feature>
<feature type="disulfide bond" description="Alternate" evidence="3">
    <location>
        <begin position="39"/>
        <end position="46"/>
    </location>
</feature>
<feature type="disulfide bond" description="Alternate" evidence="4 9 10">
    <location>
        <begin position="55"/>
        <end position="72"/>
    </location>
</feature>
<feature type="disulfide bond" description="Alternate" evidence="3">
    <location>
        <begin position="55"/>
        <end position="60"/>
    </location>
</feature>
<feature type="disulfide bond" description="Alternate" evidence="4 9 10">
    <location>
        <begin position="60"/>
        <end position="90"/>
    </location>
</feature>
<feature type="disulfide bond" description="Alternate" evidence="4 9 10">
    <location>
        <begin position="70"/>
        <end position="83"/>
    </location>
</feature>
<feature type="disulfide bond" description="Alternate" evidence="3">
    <location>
        <begin position="70"/>
        <end position="72"/>
    </location>
</feature>
<feature type="disulfide bond" evidence="4 9 10">
    <location>
        <begin position="76"/>
        <end position="82"/>
    </location>
</feature>
<feature type="disulfide bond" description="Alternate" evidence="3">
    <location>
        <begin position="83"/>
        <end position="90"/>
    </location>
</feature>
<feature type="disulfide bond" evidence="4 9 10">
    <location>
        <begin position="101"/>
        <end position="147"/>
    </location>
</feature>
<feature type="disulfide bond" evidence="4 9 10">
    <location>
        <begin position="109"/>
        <end position="321"/>
    </location>
</feature>
<feature type="disulfide bond" evidence="4 9 10">
    <location>
        <begin position="337"/>
        <end position="434"/>
    </location>
</feature>
<feature type="disulfide bond" evidence="4 9 10">
    <location>
        <begin position="385"/>
        <end position="772"/>
    </location>
</feature>
<feature type="disulfide bond" evidence="4 9 10">
    <location>
        <begin position="518"/>
        <end position="575"/>
    </location>
</feature>
<feature type="disulfide bond" evidence="4 9 10">
    <location>
        <begin position="531"/>
        <end position="632"/>
    </location>
</feature>
<feature type="disulfide bond" evidence="4 9 10">
    <location>
        <begin position="533"/>
        <end position="617"/>
    </location>
</feature>
<feature type="disulfide bond" evidence="4 9 10">
    <location>
        <begin position="740"/>
        <end position="750"/>
    </location>
</feature>
<feature type="helix" evidence="11">
    <location>
        <begin position="40"/>
        <end position="42"/>
    </location>
</feature>
<feature type="helix" evidence="12">
    <location>
        <begin position="43"/>
        <end position="47"/>
    </location>
</feature>
<feature type="turn" evidence="12">
    <location>
        <begin position="49"/>
        <end position="51"/>
    </location>
</feature>
<feature type="helix" evidence="12">
    <location>
        <begin position="57"/>
        <end position="59"/>
    </location>
</feature>
<feature type="strand" evidence="12">
    <location>
        <begin position="69"/>
        <end position="71"/>
    </location>
</feature>
<feature type="turn" evidence="12">
    <location>
        <begin position="74"/>
        <end position="80"/>
    </location>
</feature>
<feature type="helix" evidence="12">
    <location>
        <begin position="86"/>
        <end position="90"/>
    </location>
</feature>
<feature type="turn" evidence="12">
    <location>
        <begin position="96"/>
        <end position="98"/>
    </location>
</feature>
<feature type="strand" evidence="12">
    <location>
        <begin position="118"/>
        <end position="123"/>
    </location>
</feature>
<feature type="helix" evidence="12">
    <location>
        <begin position="128"/>
        <end position="134"/>
    </location>
</feature>
<feature type="helix" evidence="12">
    <location>
        <begin position="135"/>
        <end position="137"/>
    </location>
</feature>
<feature type="helix" evidence="12">
    <location>
        <begin position="139"/>
        <end position="147"/>
    </location>
</feature>
<feature type="strand" evidence="12">
    <location>
        <begin position="148"/>
        <end position="152"/>
    </location>
</feature>
<feature type="helix" evidence="12">
    <location>
        <begin position="162"/>
        <end position="171"/>
    </location>
</feature>
<feature type="helix" evidence="12">
    <location>
        <begin position="175"/>
        <end position="178"/>
    </location>
</feature>
<feature type="strand" evidence="12">
    <location>
        <begin position="182"/>
        <end position="187"/>
    </location>
</feature>
<feature type="turn" evidence="12">
    <location>
        <begin position="188"/>
        <end position="191"/>
    </location>
</feature>
<feature type="strand" evidence="12">
    <location>
        <begin position="192"/>
        <end position="194"/>
    </location>
</feature>
<feature type="strand" evidence="13">
    <location>
        <begin position="196"/>
        <end position="199"/>
    </location>
</feature>
<feature type="helix" evidence="12">
    <location>
        <begin position="200"/>
        <end position="202"/>
    </location>
</feature>
<feature type="helix" evidence="12">
    <location>
        <begin position="204"/>
        <end position="206"/>
    </location>
</feature>
<feature type="helix" evidence="12">
    <location>
        <begin position="212"/>
        <end position="218"/>
    </location>
</feature>
<feature type="strand" evidence="12">
    <location>
        <begin position="223"/>
        <end position="227"/>
    </location>
</feature>
<feature type="turn" evidence="12">
    <location>
        <begin position="229"/>
        <end position="232"/>
    </location>
</feature>
<feature type="helix" evidence="12">
    <location>
        <begin position="235"/>
        <end position="237"/>
    </location>
</feature>
<feature type="strand" evidence="12">
    <location>
        <begin position="241"/>
        <end position="243"/>
    </location>
</feature>
<feature type="strand" evidence="11">
    <location>
        <begin position="248"/>
        <end position="250"/>
    </location>
</feature>
<feature type="helix" evidence="12">
    <location>
        <begin position="252"/>
        <end position="263"/>
    </location>
</feature>
<feature type="turn" evidence="12">
    <location>
        <begin position="267"/>
        <end position="269"/>
    </location>
</feature>
<feature type="strand" evidence="12">
    <location>
        <begin position="272"/>
        <end position="278"/>
    </location>
</feature>
<feature type="helix" evidence="12">
    <location>
        <begin position="282"/>
        <end position="288"/>
    </location>
</feature>
<feature type="strand" evidence="12">
    <location>
        <begin position="290"/>
        <end position="292"/>
    </location>
</feature>
<feature type="helix" evidence="12">
    <location>
        <begin position="293"/>
        <end position="315"/>
    </location>
</feature>
<feature type="turn" evidence="12">
    <location>
        <begin position="319"/>
        <end position="321"/>
    </location>
</feature>
<feature type="strand" evidence="12">
    <location>
        <begin position="322"/>
        <end position="327"/>
    </location>
</feature>
<feature type="strand" evidence="12">
    <location>
        <begin position="333"/>
        <end position="335"/>
    </location>
</feature>
<feature type="strand" evidence="12">
    <location>
        <begin position="339"/>
        <end position="342"/>
    </location>
</feature>
<feature type="helix" evidence="12">
    <location>
        <begin position="343"/>
        <end position="345"/>
    </location>
</feature>
<feature type="strand" evidence="12">
    <location>
        <begin position="352"/>
        <end position="355"/>
    </location>
</feature>
<feature type="strand" evidence="12">
    <location>
        <begin position="357"/>
        <end position="359"/>
    </location>
</feature>
<feature type="strand" evidence="12">
    <location>
        <begin position="361"/>
        <end position="366"/>
    </location>
</feature>
<feature type="turn" evidence="12">
    <location>
        <begin position="367"/>
        <end position="373"/>
    </location>
</feature>
<feature type="helix" evidence="12">
    <location>
        <begin position="376"/>
        <end position="382"/>
    </location>
</feature>
<feature type="strand" evidence="12">
    <location>
        <begin position="391"/>
        <end position="396"/>
    </location>
</feature>
<feature type="helix" evidence="12">
    <location>
        <begin position="397"/>
        <end position="399"/>
    </location>
</feature>
<feature type="helix" evidence="12">
    <location>
        <begin position="402"/>
        <end position="404"/>
    </location>
</feature>
<feature type="strand" evidence="12">
    <location>
        <begin position="414"/>
        <end position="419"/>
    </location>
</feature>
<feature type="strand" evidence="12">
    <location>
        <begin position="424"/>
        <end position="428"/>
    </location>
</feature>
<feature type="strand" evidence="12">
    <location>
        <begin position="435"/>
        <end position="438"/>
    </location>
</feature>
<feature type="helix" evidence="12">
    <location>
        <begin position="446"/>
        <end position="448"/>
    </location>
</feature>
<feature type="strand" evidence="12">
    <location>
        <begin position="452"/>
        <end position="456"/>
    </location>
</feature>
<feature type="strand" evidence="12">
    <location>
        <begin position="461"/>
        <end position="465"/>
    </location>
</feature>
<feature type="helix" evidence="12">
    <location>
        <begin position="470"/>
        <end position="472"/>
    </location>
</feature>
<feature type="helix" evidence="12">
    <location>
        <begin position="473"/>
        <end position="480"/>
    </location>
</feature>
<feature type="turn" evidence="12">
    <location>
        <begin position="492"/>
        <end position="495"/>
    </location>
</feature>
<feature type="helix" evidence="12">
    <location>
        <begin position="496"/>
        <end position="498"/>
    </location>
</feature>
<feature type="strand" evidence="12">
    <location>
        <begin position="499"/>
        <end position="501"/>
    </location>
</feature>
<feature type="helix" evidence="12">
    <location>
        <begin position="539"/>
        <end position="544"/>
    </location>
</feature>
<feature type="helix" evidence="12">
    <location>
        <begin position="550"/>
        <end position="560"/>
    </location>
</feature>
<feature type="strand" evidence="12">
    <location>
        <begin position="574"/>
        <end position="578"/>
    </location>
</feature>
<feature type="strand" evidence="12">
    <location>
        <begin position="583"/>
        <end position="587"/>
    </location>
</feature>
<feature type="turn" evidence="12">
    <location>
        <begin position="588"/>
        <end position="591"/>
    </location>
</feature>
<feature type="strand" evidence="12">
    <location>
        <begin position="592"/>
        <end position="600"/>
    </location>
</feature>
<feature type="strand" evidence="12">
    <location>
        <begin position="614"/>
        <end position="617"/>
    </location>
</feature>
<feature type="helix" evidence="12">
    <location>
        <begin position="626"/>
        <end position="628"/>
    </location>
</feature>
<feature type="turn" evidence="12">
    <location>
        <begin position="632"/>
        <end position="634"/>
    </location>
</feature>
<feature type="strand" evidence="12">
    <location>
        <begin position="640"/>
        <end position="647"/>
    </location>
</feature>
<feature type="helix" evidence="12">
    <location>
        <begin position="649"/>
        <end position="651"/>
    </location>
</feature>
<feature type="helix" evidence="12">
    <location>
        <begin position="656"/>
        <end position="659"/>
    </location>
</feature>
<feature type="strand" evidence="12">
    <location>
        <begin position="666"/>
        <end position="671"/>
    </location>
</feature>
<feature type="helix" evidence="12">
    <location>
        <begin position="672"/>
        <end position="683"/>
    </location>
</feature>
<feature type="helix" evidence="12">
    <location>
        <begin position="685"/>
        <end position="693"/>
    </location>
</feature>
<feature type="strand" evidence="12">
    <location>
        <begin position="696"/>
        <end position="703"/>
    </location>
</feature>
<feature type="strand" evidence="12">
    <location>
        <begin position="709"/>
        <end position="711"/>
    </location>
</feature>
<feature type="helix" evidence="12">
    <location>
        <begin position="715"/>
        <end position="717"/>
    </location>
</feature>
<feature type="strand" evidence="12">
    <location>
        <begin position="731"/>
        <end position="742"/>
    </location>
</feature>
<feature type="strand" evidence="11">
    <location>
        <begin position="747"/>
        <end position="749"/>
    </location>
</feature>
<feature type="helix" evidence="12">
    <location>
        <begin position="752"/>
        <end position="754"/>
    </location>
</feature>
<feature type="strand" evidence="12">
    <location>
        <begin position="755"/>
        <end position="763"/>
    </location>
</feature>
<feature type="helix" evidence="12">
    <location>
        <begin position="769"/>
        <end position="771"/>
    </location>
</feature>
<feature type="helix" evidence="12">
    <location>
        <begin position="782"/>
        <end position="787"/>
    </location>
</feature>
<feature type="strand" evidence="13">
    <location>
        <begin position="789"/>
        <end position="791"/>
    </location>
</feature>
<feature type="helix" evidence="12">
    <location>
        <begin position="793"/>
        <end position="800"/>
    </location>
</feature>
<feature type="helix" evidence="12">
    <location>
        <begin position="812"/>
        <end position="820"/>
    </location>
</feature>
<feature type="turn" evidence="12">
    <location>
        <begin position="826"/>
        <end position="828"/>
    </location>
</feature>
<protein>
    <recommendedName>
        <fullName evidence="5">Venom phosphodiesterase</fullName>
        <shortName evidence="5">PDE</shortName>
        <ecNumber evidence="1">3.6.1.-</ecNumber>
    </recommendedName>
</protein>
<organism>
    <name type="scientific">Naja atra</name>
    <name type="common">Chinese cobra</name>
    <dbReference type="NCBI Taxonomy" id="8656"/>
    <lineage>
        <taxon>Eukaryota</taxon>
        <taxon>Metazoa</taxon>
        <taxon>Chordata</taxon>
        <taxon>Craniata</taxon>
        <taxon>Vertebrata</taxon>
        <taxon>Euteleostomi</taxon>
        <taxon>Lepidosauria</taxon>
        <taxon>Squamata</taxon>
        <taxon>Bifurcata</taxon>
        <taxon>Unidentata</taxon>
        <taxon>Episquamata</taxon>
        <taxon>Toxicofera</taxon>
        <taxon>Serpentes</taxon>
        <taxon>Colubroidea</taxon>
        <taxon>Elapidae</taxon>
        <taxon>Elapinae</taxon>
        <taxon>Naja</taxon>
    </lineage>
</organism>
<accession>A0A2D0TC04</accession>
<sequence length="830" mass="94616">LKQSKQPLESCRNRCNETFSEELSYCSCDNKCTERKACCWDYQDICVLPTQSWSCNKLRCGEKRMANVLCSCSEDCLTKKDCCTDYKSICKRETSWLKDQCASSSASQCPEGFDQSPLILFSMDGFRAEYLETWDTLMPNINKLKTCGTHAKYMRAVYPTKTFVNHYTIVTGLYAETHGIIDNNMYDVKLNQNFSLSGSNMRNAAWWGGQPIWHTASYQGLKAATYFWPGSEVKINGSYPTIYKVYNKSTPFEARVMEVLKWLDLPKAKRPDFSTLYIEEPDTTGHKFGPVSGQVIKSLQMADRTLGMLMEGLKQRNLHNCVNLILLADHGMEAISCNRLEYMTDYFNTVDFFMYEGAAPRIRSKNVPKDFYTFDSEAIVKKLTCRKPKQHFKAYLAKDLPKRLHFANNIRIDKVNLMVDRQWLAVRNKKYKYCSGGTHGYDNEFKSMEAIFLAHGPGFKEKTEVTSFENIEVYNLMCDLLKLKPAPNNGTHGSLNHLLKNPFYNPSPAKEQSPPLYCLFGPVPSPDVSGCKCSSITDLEAVNQRLNLIDQAKMQSEADNLPYGRPHVLQHSKYCLLHQTKYISAYSQDILMPLWNSYTISKSLVKPTSAPPSASDCLRLDVRIPTVQSQTCSNYQPDLAITPGFLYPPDFSSSGPEQYDALITSNIVPMYKEFARLWNYFHSTLLPKYATERNGLNVISGPIFDYNYDGHFDPYDTIDQYVNNTKIPIPTHYFVVLTSCENSTKTPLNCPPGSLKVLSFILPHRPDNSESCADKSPDNLWVEERMQTHTARVRDVELLTGLDFYSALKQPLSETLRLKTFLPIFINSVN</sequence>
<name>PDE_NAJAT</name>
<evidence type="ECO:0000250" key="1">
    <source>
        <dbReference type="UniProtKB" id="W8E7D1"/>
    </source>
</evidence>
<evidence type="ECO:0000255" key="2"/>
<evidence type="ECO:0000255" key="3">
    <source>
        <dbReference type="PROSITE-ProRule" id="PRU00350"/>
    </source>
</evidence>
<evidence type="ECO:0000269" key="4">
    <source ref="1"/>
</evidence>
<evidence type="ECO:0000303" key="5">
    <source ref="1"/>
</evidence>
<evidence type="ECO:0000305" key="6"/>
<evidence type="ECO:0000312" key="7">
    <source>
        <dbReference type="PDB" id="5GZ4"/>
    </source>
</evidence>
<evidence type="ECO:0000312" key="8">
    <source>
        <dbReference type="PDB" id="5GZ5"/>
    </source>
</evidence>
<evidence type="ECO:0007744" key="9">
    <source>
        <dbReference type="PDB" id="5GZ4"/>
    </source>
</evidence>
<evidence type="ECO:0007744" key="10">
    <source>
        <dbReference type="PDB" id="5GZ5"/>
    </source>
</evidence>
<evidence type="ECO:0007829" key="11">
    <source>
        <dbReference type="PDB" id="5GZ4"/>
    </source>
</evidence>
<evidence type="ECO:0007829" key="12">
    <source>
        <dbReference type="PDB" id="5GZ5"/>
    </source>
</evidence>
<evidence type="ECO:0007829" key="13">
    <source>
        <dbReference type="PDB" id="7CBA"/>
    </source>
</evidence>
<keyword id="KW-0002">3D-structure</keyword>
<keyword id="KW-1015">Disulfide bond</keyword>
<keyword id="KW-0325">Glycoprotein</keyword>
<keyword id="KW-1199">Hemostasis impairing toxin</keyword>
<keyword id="KW-0378">Hydrolase</keyword>
<keyword id="KW-0479">Metal-binding</keyword>
<keyword id="KW-1201">Platelet aggregation inhibiting toxin</keyword>
<keyword id="KW-0677">Repeat</keyword>
<keyword id="KW-0964">Secreted</keyword>
<keyword id="KW-0800">Toxin</keyword>
<dbReference type="EC" id="3.6.1.-" evidence="1"/>
<dbReference type="PDB" id="5GZ4">
    <property type="method" value="X-ray"/>
    <property type="resolution" value="2.55 A"/>
    <property type="chains" value="A=1-830"/>
</dbReference>
<dbReference type="PDB" id="5GZ5">
    <property type="method" value="X-ray"/>
    <property type="resolution" value="2.09 A"/>
    <property type="chains" value="A=1-830"/>
</dbReference>
<dbReference type="PDB" id="7CBA">
    <property type="method" value="X-ray"/>
    <property type="resolution" value="2.90 A"/>
    <property type="chains" value="A/B=1-830"/>
</dbReference>
<dbReference type="PDBsum" id="5GZ4"/>
<dbReference type="PDBsum" id="5GZ5"/>
<dbReference type="PDBsum" id="7CBA"/>
<dbReference type="SMR" id="A0A2D0TC04"/>
<dbReference type="GO" id="GO:0005576">
    <property type="term" value="C:extracellular region"/>
    <property type="evidence" value="ECO:0007669"/>
    <property type="project" value="UniProtKB-SubCell"/>
</dbReference>
<dbReference type="GO" id="GO:0043262">
    <property type="term" value="F:ADP phosphatase activity"/>
    <property type="evidence" value="ECO:0007669"/>
    <property type="project" value="RHEA"/>
</dbReference>
<dbReference type="GO" id="GO:0046872">
    <property type="term" value="F:metal ion binding"/>
    <property type="evidence" value="ECO:0007669"/>
    <property type="project" value="UniProtKB-KW"/>
</dbReference>
<dbReference type="GO" id="GO:0003676">
    <property type="term" value="F:nucleic acid binding"/>
    <property type="evidence" value="ECO:0007669"/>
    <property type="project" value="InterPro"/>
</dbReference>
<dbReference type="GO" id="GO:0047429">
    <property type="term" value="F:nucleoside triphosphate diphosphatase activity"/>
    <property type="evidence" value="ECO:0007669"/>
    <property type="project" value="TreeGrafter"/>
</dbReference>
<dbReference type="GO" id="GO:0090729">
    <property type="term" value="F:toxin activity"/>
    <property type="evidence" value="ECO:0007669"/>
    <property type="project" value="UniProtKB-KW"/>
</dbReference>
<dbReference type="GO" id="GO:0009143">
    <property type="term" value="P:nucleoside triphosphate catabolic process"/>
    <property type="evidence" value="ECO:0007669"/>
    <property type="project" value="TreeGrafter"/>
</dbReference>
<dbReference type="CDD" id="cd16018">
    <property type="entry name" value="Enpp"/>
    <property type="match status" value="1"/>
</dbReference>
<dbReference type="CDD" id="cd00091">
    <property type="entry name" value="NUC"/>
    <property type="match status" value="1"/>
</dbReference>
<dbReference type="FunFam" id="4.10.410.20:FF:000001">
    <property type="entry name" value="Ectonucleotide pyrophosphatase/phosphodiesterase family member 2"/>
    <property type="match status" value="1"/>
</dbReference>
<dbReference type="FunFam" id="3.40.720.10:FF:000145">
    <property type="entry name" value="Uncharacterized protein"/>
    <property type="match status" value="1"/>
</dbReference>
<dbReference type="Gene3D" id="4.10.410.20">
    <property type="match status" value="2"/>
</dbReference>
<dbReference type="Gene3D" id="3.40.720.10">
    <property type="entry name" value="Alkaline Phosphatase, subunit A"/>
    <property type="match status" value="1"/>
</dbReference>
<dbReference type="Gene3D" id="3.40.570.10">
    <property type="entry name" value="Extracellular Endonuclease, subunit A"/>
    <property type="match status" value="1"/>
</dbReference>
<dbReference type="InterPro" id="IPR017850">
    <property type="entry name" value="Alkaline_phosphatase_core_sf"/>
</dbReference>
<dbReference type="InterPro" id="IPR044929">
    <property type="entry name" value="DNA/RNA_non-sp_Endonuclease_sf"/>
</dbReference>
<dbReference type="InterPro" id="IPR001604">
    <property type="entry name" value="Endo_G_ENPP1-like_dom"/>
</dbReference>
<dbReference type="InterPro" id="IPR020821">
    <property type="entry name" value="ENPP1-3/EXOG-like_nuc-like"/>
</dbReference>
<dbReference type="InterPro" id="IPR044925">
    <property type="entry name" value="His-Me_finger_sf"/>
</dbReference>
<dbReference type="InterPro" id="IPR002591">
    <property type="entry name" value="Phosphodiest/P_Trfase"/>
</dbReference>
<dbReference type="InterPro" id="IPR036024">
    <property type="entry name" value="Somatomedin_B-like_dom_sf"/>
</dbReference>
<dbReference type="InterPro" id="IPR001212">
    <property type="entry name" value="Somatomedin_B_dom"/>
</dbReference>
<dbReference type="PANTHER" id="PTHR10151">
    <property type="entry name" value="ECTONUCLEOTIDE PYROPHOSPHATASE/PHOSPHODIESTERASE"/>
    <property type="match status" value="1"/>
</dbReference>
<dbReference type="PANTHER" id="PTHR10151:SF107">
    <property type="entry name" value="ECTONUCLEOTIDE PYROPHOSPHATASE_PHOSPHODIESTERASE FAMILY MEMBER 3"/>
    <property type="match status" value="1"/>
</dbReference>
<dbReference type="Pfam" id="PF01223">
    <property type="entry name" value="Endonuclease_NS"/>
    <property type="match status" value="1"/>
</dbReference>
<dbReference type="Pfam" id="PF01663">
    <property type="entry name" value="Phosphodiest"/>
    <property type="match status" value="1"/>
</dbReference>
<dbReference type="Pfam" id="PF01033">
    <property type="entry name" value="Somatomedin_B"/>
    <property type="match status" value="2"/>
</dbReference>
<dbReference type="SMART" id="SM00892">
    <property type="entry name" value="Endonuclease_NS"/>
    <property type="match status" value="1"/>
</dbReference>
<dbReference type="SMART" id="SM00477">
    <property type="entry name" value="NUC"/>
    <property type="match status" value="1"/>
</dbReference>
<dbReference type="SMART" id="SM00201">
    <property type="entry name" value="SO"/>
    <property type="match status" value="2"/>
</dbReference>
<dbReference type="SUPFAM" id="SSF53649">
    <property type="entry name" value="Alkaline phosphatase-like"/>
    <property type="match status" value="1"/>
</dbReference>
<dbReference type="SUPFAM" id="SSF54060">
    <property type="entry name" value="His-Me finger endonucleases"/>
    <property type="match status" value="1"/>
</dbReference>
<dbReference type="SUPFAM" id="SSF90188">
    <property type="entry name" value="Somatomedin B domain"/>
    <property type="match status" value="2"/>
</dbReference>
<dbReference type="PROSITE" id="PS00524">
    <property type="entry name" value="SMB_1"/>
    <property type="match status" value="2"/>
</dbReference>
<dbReference type="PROSITE" id="PS50958">
    <property type="entry name" value="SMB_2"/>
    <property type="match status" value="2"/>
</dbReference>
<comment type="function">
    <text evidence="1">Hydrolyzes ADP with high activity. Shows weak or no activity on 5'-AMP, 5'-GMP, 3'-AMP, ATP, cAMP, and cGMP. Is devoid of monophosphatase and proteinase activities. Dose-dependently inhibits platelet aggregation induced by ADP and collagen.</text>
</comment>
<comment type="catalytic activity">
    <reaction evidence="1">
        <text>ADP + H2O = AMP + phosphate + H(+)</text>
        <dbReference type="Rhea" id="RHEA:61436"/>
        <dbReference type="ChEBI" id="CHEBI:15377"/>
        <dbReference type="ChEBI" id="CHEBI:15378"/>
        <dbReference type="ChEBI" id="CHEBI:43474"/>
        <dbReference type="ChEBI" id="CHEBI:456215"/>
        <dbReference type="ChEBI" id="CHEBI:456216"/>
    </reaction>
</comment>
<comment type="cofactor">
    <cofactor evidence="1">
        <name>a divalent metal cation</name>
        <dbReference type="ChEBI" id="CHEBI:60240"/>
    </cofactor>
    <text evidence="4 9 10">Binds 2 divalent metal cations per subunit.</text>
</comment>
<comment type="subunit">
    <text evidence="1">Monomer cleaved in two subunits; disulfide-linked. Is synthesized as a single-chain protein and is subsequently cleaved to form a two-subunit protein held together with disulfide bonds.</text>
</comment>
<comment type="subcellular location">
    <subcellularLocation>
        <location evidence="1">Secreted</location>
    </subcellularLocation>
</comment>
<comment type="tissue specificity">
    <text evidence="6">Expressed by venom gland.</text>
</comment>
<comment type="similarity">
    <text evidence="6">Belongs to the nucleotide pyrophosphatase/phosphodiesterase family.</text>
</comment>
<reference evidence="7 8" key="1">
    <citation type="submission" date="2016-09" db="PDB data bank">
        <title>Crystal structure of snake venom phosphodiesterase (PDE) from Taiwan cobra (Naja atra atra) in complex with AMP.</title>
        <authorList>
            <person name="Lin C.C."/>
            <person name="Wu B.S."/>
            <person name="Wu W.G."/>
        </authorList>
    </citation>
    <scope>X-RAY CRYSTALLOGRAPHY (2.09 ANGSTROMS) IN COMPLEX WITH ZINC AND AMP</scope>
    <scope>ACTIVE SITE</scope>
    <scope>GLYCOSYLATION AT ASN-16; ASN-193; ASN-236; ASN-247; ASN-489; ASN-723 AND ASN-742</scope>
    <scope>DISULFIDE BOND</scope>
</reference>